<keyword id="KW-0963">Cytoplasm</keyword>
<keyword id="KW-0444">Lipid biosynthesis</keyword>
<keyword id="KW-0443">Lipid metabolism</keyword>
<keyword id="KW-0520">NAD</keyword>
<keyword id="KW-0521">NADP</keyword>
<keyword id="KW-0547">Nucleotide-binding</keyword>
<keyword id="KW-0560">Oxidoreductase</keyword>
<keyword id="KW-0594">Phospholipid biosynthesis</keyword>
<keyword id="KW-1208">Phospholipid metabolism</keyword>
<keyword id="KW-1185">Reference proteome</keyword>
<gene>
    <name evidence="1" type="primary">gpsA</name>
    <name type="ordered locus">AZC_0263</name>
</gene>
<feature type="chain" id="PRO_1000072229" description="Glycerol-3-phosphate dehydrogenase [NAD(P)+]">
    <location>
        <begin position="1"/>
        <end position="328"/>
    </location>
</feature>
<feature type="active site" description="Proton acceptor" evidence="1">
    <location>
        <position position="191"/>
    </location>
</feature>
<feature type="binding site" evidence="1">
    <location>
        <position position="15"/>
    </location>
    <ligand>
        <name>NADPH</name>
        <dbReference type="ChEBI" id="CHEBI:57783"/>
    </ligand>
</feature>
<feature type="binding site" evidence="1">
    <location>
        <position position="35"/>
    </location>
    <ligand>
        <name>NADPH</name>
        <dbReference type="ChEBI" id="CHEBI:57783"/>
    </ligand>
</feature>
<feature type="binding site" evidence="1">
    <location>
        <position position="108"/>
    </location>
    <ligand>
        <name>NADPH</name>
        <dbReference type="ChEBI" id="CHEBI:57783"/>
    </ligand>
</feature>
<feature type="binding site" evidence="1">
    <location>
        <position position="108"/>
    </location>
    <ligand>
        <name>sn-glycerol 3-phosphate</name>
        <dbReference type="ChEBI" id="CHEBI:57597"/>
    </ligand>
</feature>
<feature type="binding site" evidence="1">
    <location>
        <position position="136"/>
    </location>
    <ligand>
        <name>sn-glycerol 3-phosphate</name>
        <dbReference type="ChEBI" id="CHEBI:57597"/>
    </ligand>
</feature>
<feature type="binding site" evidence="1">
    <location>
        <position position="138"/>
    </location>
    <ligand>
        <name>sn-glycerol 3-phosphate</name>
        <dbReference type="ChEBI" id="CHEBI:57597"/>
    </ligand>
</feature>
<feature type="binding site" evidence="1">
    <location>
        <position position="140"/>
    </location>
    <ligand>
        <name>NADPH</name>
        <dbReference type="ChEBI" id="CHEBI:57783"/>
    </ligand>
</feature>
<feature type="binding site" evidence="1">
    <location>
        <position position="191"/>
    </location>
    <ligand>
        <name>sn-glycerol 3-phosphate</name>
        <dbReference type="ChEBI" id="CHEBI:57597"/>
    </ligand>
</feature>
<feature type="binding site" evidence="1">
    <location>
        <position position="244"/>
    </location>
    <ligand>
        <name>sn-glycerol 3-phosphate</name>
        <dbReference type="ChEBI" id="CHEBI:57597"/>
    </ligand>
</feature>
<feature type="binding site" evidence="1">
    <location>
        <position position="254"/>
    </location>
    <ligand>
        <name>sn-glycerol 3-phosphate</name>
        <dbReference type="ChEBI" id="CHEBI:57597"/>
    </ligand>
</feature>
<feature type="binding site" evidence="1">
    <location>
        <position position="255"/>
    </location>
    <ligand>
        <name>NADPH</name>
        <dbReference type="ChEBI" id="CHEBI:57783"/>
    </ligand>
</feature>
<feature type="binding site" evidence="1">
    <location>
        <position position="255"/>
    </location>
    <ligand>
        <name>sn-glycerol 3-phosphate</name>
        <dbReference type="ChEBI" id="CHEBI:57597"/>
    </ligand>
</feature>
<feature type="binding site" evidence="1">
    <location>
        <position position="256"/>
    </location>
    <ligand>
        <name>sn-glycerol 3-phosphate</name>
        <dbReference type="ChEBI" id="CHEBI:57597"/>
    </ligand>
</feature>
<feature type="binding site" evidence="1">
    <location>
        <position position="275"/>
    </location>
    <ligand>
        <name>NADPH</name>
        <dbReference type="ChEBI" id="CHEBI:57783"/>
    </ligand>
</feature>
<feature type="binding site" evidence="1">
    <location>
        <position position="277"/>
    </location>
    <ligand>
        <name>NADPH</name>
        <dbReference type="ChEBI" id="CHEBI:57783"/>
    </ligand>
</feature>
<sequence length="328" mass="32590">MSAFDRIGVVGAGAWGTALANVAARAGRAVKLWSRDPAQVAEMAARRENARGLPGIALEAGVTPTADLREAAACEAVLLVVPAQVCRAVSGELAPLLAAGTPLVSCAKGIERGTAAFMTDVIRAAAPAARPMVLSGPSFADDVARGLPTAVTLAGEDGALAETLAAALGSSTFRLYHSSDVRGVEIGGAAKNVLAIAAGIVAGRRLGASAGAALTARGFAELQRFGRAFGAQPDTLTGLSGLGDLILTAGGPQSRNFAFGLALGQTGEVPQGGKLAEGAFTASALVAMAAGRGVEMPICAAVDAVLSGRLSVDGAIEALMARPQRAEA</sequence>
<protein>
    <recommendedName>
        <fullName evidence="1">Glycerol-3-phosphate dehydrogenase [NAD(P)+]</fullName>
        <ecNumber evidence="1">1.1.1.94</ecNumber>
    </recommendedName>
    <alternativeName>
        <fullName evidence="1">NAD(P)(+)-dependent glycerol-3-phosphate dehydrogenase</fullName>
    </alternativeName>
    <alternativeName>
        <fullName evidence="1">NAD(P)H-dependent dihydroxyacetone-phosphate reductase</fullName>
    </alternativeName>
</protein>
<accession>A8IJ80</accession>
<organism>
    <name type="scientific">Azorhizobium caulinodans (strain ATCC 43989 / DSM 5975 / JCM 20966 / LMG 6465 / NBRC 14845 / NCIMB 13405 / ORS 571)</name>
    <dbReference type="NCBI Taxonomy" id="438753"/>
    <lineage>
        <taxon>Bacteria</taxon>
        <taxon>Pseudomonadati</taxon>
        <taxon>Pseudomonadota</taxon>
        <taxon>Alphaproteobacteria</taxon>
        <taxon>Hyphomicrobiales</taxon>
        <taxon>Xanthobacteraceae</taxon>
        <taxon>Azorhizobium</taxon>
    </lineage>
</organism>
<name>GPDA_AZOC5</name>
<reference key="1">
    <citation type="submission" date="2007-04" db="EMBL/GenBank/DDBJ databases">
        <title>Complete genome sequence of the nitrogen-fixing bacterium Azorhizobium caulinodans ORS571.</title>
        <authorList>
            <person name="Lee K.B."/>
            <person name="Backer P.D."/>
            <person name="Aono T."/>
            <person name="Liu C.T."/>
            <person name="Suzuki S."/>
            <person name="Suzuki T."/>
            <person name="Kaneko T."/>
            <person name="Yamada M."/>
            <person name="Tabata S."/>
            <person name="Kupfer D.M."/>
            <person name="Najar F.Z."/>
            <person name="Wiley G.B."/>
            <person name="Roe B."/>
            <person name="Binnewies T."/>
            <person name="Ussery D."/>
            <person name="Vereecke D."/>
            <person name="Gevers D."/>
            <person name="Holsters M."/>
            <person name="Oyaizu H."/>
        </authorList>
    </citation>
    <scope>NUCLEOTIDE SEQUENCE [LARGE SCALE GENOMIC DNA]</scope>
    <source>
        <strain>ATCC 43989 / DSM 5975 / JCM 20966 / LMG 6465 / NBRC 14845 / NCIMB 13405 / ORS 571</strain>
    </source>
</reference>
<dbReference type="EC" id="1.1.1.94" evidence="1"/>
<dbReference type="EMBL" id="AP009384">
    <property type="protein sequence ID" value="BAF86261.1"/>
    <property type="molecule type" value="Genomic_DNA"/>
</dbReference>
<dbReference type="RefSeq" id="WP_012168794.1">
    <property type="nucleotide sequence ID" value="NC_009937.1"/>
</dbReference>
<dbReference type="SMR" id="A8IJ80"/>
<dbReference type="STRING" id="438753.AZC_0263"/>
<dbReference type="KEGG" id="azc:AZC_0263"/>
<dbReference type="eggNOG" id="COG0240">
    <property type="taxonomic scope" value="Bacteria"/>
</dbReference>
<dbReference type="HOGENOM" id="CLU_033449_0_2_5"/>
<dbReference type="UniPathway" id="UPA00940"/>
<dbReference type="Proteomes" id="UP000000270">
    <property type="component" value="Chromosome"/>
</dbReference>
<dbReference type="GO" id="GO:0005829">
    <property type="term" value="C:cytosol"/>
    <property type="evidence" value="ECO:0007669"/>
    <property type="project" value="TreeGrafter"/>
</dbReference>
<dbReference type="GO" id="GO:0047952">
    <property type="term" value="F:glycerol-3-phosphate dehydrogenase [NAD(P)+] activity"/>
    <property type="evidence" value="ECO:0007669"/>
    <property type="project" value="UniProtKB-UniRule"/>
</dbReference>
<dbReference type="GO" id="GO:0051287">
    <property type="term" value="F:NAD binding"/>
    <property type="evidence" value="ECO:0007669"/>
    <property type="project" value="InterPro"/>
</dbReference>
<dbReference type="GO" id="GO:0005975">
    <property type="term" value="P:carbohydrate metabolic process"/>
    <property type="evidence" value="ECO:0007669"/>
    <property type="project" value="InterPro"/>
</dbReference>
<dbReference type="GO" id="GO:0046167">
    <property type="term" value="P:glycerol-3-phosphate biosynthetic process"/>
    <property type="evidence" value="ECO:0007669"/>
    <property type="project" value="UniProtKB-UniRule"/>
</dbReference>
<dbReference type="GO" id="GO:0046168">
    <property type="term" value="P:glycerol-3-phosphate catabolic process"/>
    <property type="evidence" value="ECO:0007669"/>
    <property type="project" value="InterPro"/>
</dbReference>
<dbReference type="GO" id="GO:0006650">
    <property type="term" value="P:glycerophospholipid metabolic process"/>
    <property type="evidence" value="ECO:0007669"/>
    <property type="project" value="UniProtKB-UniRule"/>
</dbReference>
<dbReference type="GO" id="GO:0008654">
    <property type="term" value="P:phospholipid biosynthetic process"/>
    <property type="evidence" value="ECO:0007669"/>
    <property type="project" value="UniProtKB-KW"/>
</dbReference>
<dbReference type="FunFam" id="3.40.50.720:FF:000019">
    <property type="entry name" value="Glycerol-3-phosphate dehydrogenase [NAD(P)+]"/>
    <property type="match status" value="1"/>
</dbReference>
<dbReference type="Gene3D" id="1.10.1040.10">
    <property type="entry name" value="N-(1-d-carboxylethyl)-l-norvaline Dehydrogenase, domain 2"/>
    <property type="match status" value="1"/>
</dbReference>
<dbReference type="Gene3D" id="3.40.50.720">
    <property type="entry name" value="NAD(P)-binding Rossmann-like Domain"/>
    <property type="match status" value="1"/>
</dbReference>
<dbReference type="HAMAP" id="MF_00394">
    <property type="entry name" value="NAD_Glyc3P_dehydrog"/>
    <property type="match status" value="1"/>
</dbReference>
<dbReference type="InterPro" id="IPR008927">
    <property type="entry name" value="6-PGluconate_DH-like_C_sf"/>
</dbReference>
<dbReference type="InterPro" id="IPR013328">
    <property type="entry name" value="6PGD_dom2"/>
</dbReference>
<dbReference type="InterPro" id="IPR006168">
    <property type="entry name" value="G3P_DH_NAD-dep"/>
</dbReference>
<dbReference type="InterPro" id="IPR006109">
    <property type="entry name" value="G3P_DH_NAD-dep_C"/>
</dbReference>
<dbReference type="InterPro" id="IPR011128">
    <property type="entry name" value="G3P_DH_NAD-dep_N"/>
</dbReference>
<dbReference type="InterPro" id="IPR036291">
    <property type="entry name" value="NAD(P)-bd_dom_sf"/>
</dbReference>
<dbReference type="NCBIfam" id="NF000940">
    <property type="entry name" value="PRK00094.1-2"/>
    <property type="match status" value="1"/>
</dbReference>
<dbReference type="NCBIfam" id="NF000942">
    <property type="entry name" value="PRK00094.1-4"/>
    <property type="match status" value="1"/>
</dbReference>
<dbReference type="PANTHER" id="PTHR11728">
    <property type="entry name" value="GLYCEROL-3-PHOSPHATE DEHYDROGENASE"/>
    <property type="match status" value="1"/>
</dbReference>
<dbReference type="PANTHER" id="PTHR11728:SF1">
    <property type="entry name" value="GLYCEROL-3-PHOSPHATE DEHYDROGENASE [NAD(+)] 2, CHLOROPLASTIC"/>
    <property type="match status" value="1"/>
</dbReference>
<dbReference type="Pfam" id="PF07479">
    <property type="entry name" value="NAD_Gly3P_dh_C"/>
    <property type="match status" value="1"/>
</dbReference>
<dbReference type="Pfam" id="PF01210">
    <property type="entry name" value="NAD_Gly3P_dh_N"/>
    <property type="match status" value="1"/>
</dbReference>
<dbReference type="PIRSF" id="PIRSF000114">
    <property type="entry name" value="Glycerol-3-P_dh"/>
    <property type="match status" value="1"/>
</dbReference>
<dbReference type="PRINTS" id="PR00077">
    <property type="entry name" value="GPDHDRGNASE"/>
</dbReference>
<dbReference type="SUPFAM" id="SSF48179">
    <property type="entry name" value="6-phosphogluconate dehydrogenase C-terminal domain-like"/>
    <property type="match status" value="1"/>
</dbReference>
<dbReference type="SUPFAM" id="SSF51735">
    <property type="entry name" value="NAD(P)-binding Rossmann-fold domains"/>
    <property type="match status" value="1"/>
</dbReference>
<dbReference type="PROSITE" id="PS00957">
    <property type="entry name" value="NAD_G3PDH"/>
    <property type="match status" value="1"/>
</dbReference>
<evidence type="ECO:0000255" key="1">
    <source>
        <dbReference type="HAMAP-Rule" id="MF_00394"/>
    </source>
</evidence>
<proteinExistence type="inferred from homology"/>
<comment type="function">
    <text evidence="1">Catalyzes the reduction of the glycolytic intermediate dihydroxyacetone phosphate (DHAP) to sn-glycerol 3-phosphate (G3P), the key precursor for phospholipid synthesis.</text>
</comment>
<comment type="catalytic activity">
    <reaction evidence="1">
        <text>sn-glycerol 3-phosphate + NAD(+) = dihydroxyacetone phosphate + NADH + H(+)</text>
        <dbReference type="Rhea" id="RHEA:11092"/>
        <dbReference type="ChEBI" id="CHEBI:15378"/>
        <dbReference type="ChEBI" id="CHEBI:57540"/>
        <dbReference type="ChEBI" id="CHEBI:57597"/>
        <dbReference type="ChEBI" id="CHEBI:57642"/>
        <dbReference type="ChEBI" id="CHEBI:57945"/>
        <dbReference type="EC" id="1.1.1.94"/>
    </reaction>
    <physiologicalReaction direction="right-to-left" evidence="1">
        <dbReference type="Rhea" id="RHEA:11094"/>
    </physiologicalReaction>
</comment>
<comment type="catalytic activity">
    <reaction evidence="1">
        <text>sn-glycerol 3-phosphate + NADP(+) = dihydroxyacetone phosphate + NADPH + H(+)</text>
        <dbReference type="Rhea" id="RHEA:11096"/>
        <dbReference type="ChEBI" id="CHEBI:15378"/>
        <dbReference type="ChEBI" id="CHEBI:57597"/>
        <dbReference type="ChEBI" id="CHEBI:57642"/>
        <dbReference type="ChEBI" id="CHEBI:57783"/>
        <dbReference type="ChEBI" id="CHEBI:58349"/>
        <dbReference type="EC" id="1.1.1.94"/>
    </reaction>
    <physiologicalReaction direction="right-to-left" evidence="1">
        <dbReference type="Rhea" id="RHEA:11098"/>
    </physiologicalReaction>
</comment>
<comment type="pathway">
    <text evidence="1">Membrane lipid metabolism; glycerophospholipid metabolism.</text>
</comment>
<comment type="subcellular location">
    <subcellularLocation>
        <location evidence="1">Cytoplasm</location>
    </subcellularLocation>
</comment>
<comment type="similarity">
    <text evidence="1">Belongs to the NAD-dependent glycerol-3-phosphate dehydrogenase family.</text>
</comment>